<comment type="catalytic activity">
    <reaction evidence="1">
        <text>CMP + ATP = CDP + ADP</text>
        <dbReference type="Rhea" id="RHEA:11600"/>
        <dbReference type="ChEBI" id="CHEBI:30616"/>
        <dbReference type="ChEBI" id="CHEBI:58069"/>
        <dbReference type="ChEBI" id="CHEBI:60377"/>
        <dbReference type="ChEBI" id="CHEBI:456216"/>
        <dbReference type="EC" id="2.7.4.25"/>
    </reaction>
</comment>
<comment type="catalytic activity">
    <reaction evidence="1">
        <text>dCMP + ATP = dCDP + ADP</text>
        <dbReference type="Rhea" id="RHEA:25094"/>
        <dbReference type="ChEBI" id="CHEBI:30616"/>
        <dbReference type="ChEBI" id="CHEBI:57566"/>
        <dbReference type="ChEBI" id="CHEBI:58593"/>
        <dbReference type="ChEBI" id="CHEBI:456216"/>
        <dbReference type="EC" id="2.7.4.25"/>
    </reaction>
</comment>
<comment type="subcellular location">
    <subcellularLocation>
        <location evidence="1">Cytoplasm</location>
    </subcellularLocation>
</comment>
<comment type="similarity">
    <text evidence="1">Belongs to the cytidylate kinase family. Type 1 subfamily.</text>
</comment>
<reference key="1">
    <citation type="journal article" date="2003" name="Proc. Natl. Acad. Sci. U.S.A.">
        <title>Complete genome sequence of Lactobacillus plantarum WCFS1.</title>
        <authorList>
            <person name="Kleerebezem M."/>
            <person name="Boekhorst J."/>
            <person name="van Kranenburg R."/>
            <person name="Molenaar D."/>
            <person name="Kuipers O.P."/>
            <person name="Leer R."/>
            <person name="Tarchini R."/>
            <person name="Peters S.A."/>
            <person name="Sandbrink H.M."/>
            <person name="Fiers M.W.E.J."/>
            <person name="Stiekema W."/>
            <person name="Klein Lankhorst R.M."/>
            <person name="Bron P.A."/>
            <person name="Hoffer S.M."/>
            <person name="Nierop Groot M.N."/>
            <person name="Kerkhoven R."/>
            <person name="De Vries M."/>
            <person name="Ursing B."/>
            <person name="De Vos W.M."/>
            <person name="Siezen R.J."/>
        </authorList>
    </citation>
    <scope>NUCLEOTIDE SEQUENCE [LARGE SCALE GENOMIC DNA]</scope>
    <source>
        <strain>ATCC BAA-793 / NCIMB 8826 / WCFS1</strain>
    </source>
</reference>
<reference key="2">
    <citation type="journal article" date="2012" name="J. Bacteriol.">
        <title>Complete resequencing and reannotation of the Lactobacillus plantarum WCFS1 genome.</title>
        <authorList>
            <person name="Siezen R.J."/>
            <person name="Francke C."/>
            <person name="Renckens B."/>
            <person name="Boekhorst J."/>
            <person name="Wels M."/>
            <person name="Kleerebezem M."/>
            <person name="van Hijum S.A."/>
        </authorList>
    </citation>
    <scope>NUCLEOTIDE SEQUENCE [LARGE SCALE GENOMIC DNA]</scope>
    <scope>GENOME REANNOTATION</scope>
    <source>
        <strain>ATCC BAA-793 / NCIMB 8826 / WCFS1</strain>
    </source>
</reference>
<keyword id="KW-0067">ATP-binding</keyword>
<keyword id="KW-0963">Cytoplasm</keyword>
<keyword id="KW-0418">Kinase</keyword>
<keyword id="KW-0547">Nucleotide-binding</keyword>
<keyword id="KW-1185">Reference proteome</keyword>
<keyword id="KW-0808">Transferase</keyword>
<protein>
    <recommendedName>
        <fullName evidence="1">Cytidylate kinase</fullName>
        <shortName evidence="1">CK</shortName>
        <ecNumber evidence="1">2.7.4.25</ecNumber>
    </recommendedName>
    <alternativeName>
        <fullName evidence="1">Cytidine monophosphate kinase</fullName>
        <shortName evidence="1">CMP kinase</shortName>
    </alternativeName>
</protein>
<sequence length="228" mass="24640">MAKQALQVAIDGPASAGKSTVAKLVAKRFGYIYVDTGAMYRAVTYWAMQQHVDLADEAAVITAMKSLKISFKPGEPDQLVFANQEDITAAIRQPDVTNNVSTIAALPQVRTILTEQQREMANAGGIVMDGRDIGTTVLPNAEVKIFLVASAAERAKRRYAENVKKGIDTPLAQLQAEIELRDHKDSTRKVSPLTQATDATLVDTTPMSIDEVVAAIAKIITKKQSSTI</sequence>
<feature type="chain" id="PRO_0000131925" description="Cytidylate kinase">
    <location>
        <begin position="1"/>
        <end position="228"/>
    </location>
</feature>
<feature type="binding site" evidence="1">
    <location>
        <begin position="12"/>
        <end position="20"/>
    </location>
    <ligand>
        <name>ATP</name>
        <dbReference type="ChEBI" id="CHEBI:30616"/>
    </ligand>
</feature>
<gene>
    <name evidence="1" type="primary">cmk</name>
    <name type="ordered locus">lp_1883</name>
</gene>
<organism>
    <name type="scientific">Lactiplantibacillus plantarum (strain ATCC BAA-793 / NCIMB 8826 / WCFS1)</name>
    <name type="common">Lactobacillus plantarum</name>
    <dbReference type="NCBI Taxonomy" id="220668"/>
    <lineage>
        <taxon>Bacteria</taxon>
        <taxon>Bacillati</taxon>
        <taxon>Bacillota</taxon>
        <taxon>Bacilli</taxon>
        <taxon>Lactobacillales</taxon>
        <taxon>Lactobacillaceae</taxon>
        <taxon>Lactiplantibacillus</taxon>
    </lineage>
</organism>
<dbReference type="EC" id="2.7.4.25" evidence="1"/>
<dbReference type="EMBL" id="AL935263">
    <property type="protein sequence ID" value="CCC79150.1"/>
    <property type="molecule type" value="Genomic_DNA"/>
</dbReference>
<dbReference type="RefSeq" id="WP_003640590.1">
    <property type="nucleotide sequence ID" value="NC_004567.2"/>
</dbReference>
<dbReference type="RefSeq" id="YP_004889664.1">
    <property type="nucleotide sequence ID" value="NC_004567.2"/>
</dbReference>
<dbReference type="SMR" id="Q88VZ4"/>
<dbReference type="STRING" id="220668.lp_1883"/>
<dbReference type="EnsemblBacteria" id="CCC79150">
    <property type="protein sequence ID" value="CCC79150"/>
    <property type="gene ID" value="lp_1883"/>
</dbReference>
<dbReference type="GeneID" id="77218243"/>
<dbReference type="KEGG" id="lpl:lp_1883"/>
<dbReference type="PATRIC" id="fig|220668.9.peg.1586"/>
<dbReference type="eggNOG" id="COG0283">
    <property type="taxonomic scope" value="Bacteria"/>
</dbReference>
<dbReference type="HOGENOM" id="CLU_079959_0_2_9"/>
<dbReference type="OrthoDB" id="9807434at2"/>
<dbReference type="PhylomeDB" id="Q88VZ4"/>
<dbReference type="Proteomes" id="UP000000432">
    <property type="component" value="Chromosome"/>
</dbReference>
<dbReference type="GO" id="GO:0005829">
    <property type="term" value="C:cytosol"/>
    <property type="evidence" value="ECO:0007669"/>
    <property type="project" value="TreeGrafter"/>
</dbReference>
<dbReference type="GO" id="GO:0005524">
    <property type="term" value="F:ATP binding"/>
    <property type="evidence" value="ECO:0007669"/>
    <property type="project" value="UniProtKB-UniRule"/>
</dbReference>
<dbReference type="GO" id="GO:0036430">
    <property type="term" value="F:CMP kinase activity"/>
    <property type="evidence" value="ECO:0007669"/>
    <property type="project" value="RHEA"/>
</dbReference>
<dbReference type="GO" id="GO:0036431">
    <property type="term" value="F:dCMP kinase activity"/>
    <property type="evidence" value="ECO:0007669"/>
    <property type="project" value="RHEA"/>
</dbReference>
<dbReference type="GO" id="GO:0015949">
    <property type="term" value="P:nucleobase-containing small molecule interconversion"/>
    <property type="evidence" value="ECO:0007669"/>
    <property type="project" value="TreeGrafter"/>
</dbReference>
<dbReference type="GO" id="GO:0006220">
    <property type="term" value="P:pyrimidine nucleotide metabolic process"/>
    <property type="evidence" value="ECO:0007669"/>
    <property type="project" value="UniProtKB-UniRule"/>
</dbReference>
<dbReference type="CDD" id="cd02020">
    <property type="entry name" value="CMPK"/>
    <property type="match status" value="1"/>
</dbReference>
<dbReference type="Gene3D" id="3.40.50.300">
    <property type="entry name" value="P-loop containing nucleotide triphosphate hydrolases"/>
    <property type="match status" value="1"/>
</dbReference>
<dbReference type="HAMAP" id="MF_00238">
    <property type="entry name" value="Cytidyl_kinase_type1"/>
    <property type="match status" value="1"/>
</dbReference>
<dbReference type="InterPro" id="IPR003136">
    <property type="entry name" value="Cytidylate_kin"/>
</dbReference>
<dbReference type="InterPro" id="IPR011994">
    <property type="entry name" value="Cytidylate_kinase_dom"/>
</dbReference>
<dbReference type="InterPro" id="IPR027417">
    <property type="entry name" value="P-loop_NTPase"/>
</dbReference>
<dbReference type="NCBIfam" id="TIGR00017">
    <property type="entry name" value="cmk"/>
    <property type="match status" value="1"/>
</dbReference>
<dbReference type="PANTHER" id="PTHR21299:SF2">
    <property type="entry name" value="CYTIDYLATE KINASE"/>
    <property type="match status" value="1"/>
</dbReference>
<dbReference type="PANTHER" id="PTHR21299">
    <property type="entry name" value="CYTIDYLATE KINASE/PANTOATE-BETA-ALANINE LIGASE"/>
    <property type="match status" value="1"/>
</dbReference>
<dbReference type="Pfam" id="PF02224">
    <property type="entry name" value="Cytidylate_kin"/>
    <property type="match status" value="1"/>
</dbReference>
<dbReference type="SUPFAM" id="SSF52540">
    <property type="entry name" value="P-loop containing nucleoside triphosphate hydrolases"/>
    <property type="match status" value="1"/>
</dbReference>
<proteinExistence type="inferred from homology"/>
<name>KCY_LACPL</name>
<accession>Q88VZ4</accession>
<accession>F9UPL1</accession>
<evidence type="ECO:0000255" key="1">
    <source>
        <dbReference type="HAMAP-Rule" id="MF_00238"/>
    </source>
</evidence>